<name>SCPA_LISIN</name>
<reference key="1">
    <citation type="journal article" date="2001" name="Science">
        <title>Comparative genomics of Listeria species.</title>
        <authorList>
            <person name="Glaser P."/>
            <person name="Frangeul L."/>
            <person name="Buchrieser C."/>
            <person name="Rusniok C."/>
            <person name="Amend A."/>
            <person name="Baquero F."/>
            <person name="Berche P."/>
            <person name="Bloecker H."/>
            <person name="Brandt P."/>
            <person name="Chakraborty T."/>
            <person name="Charbit A."/>
            <person name="Chetouani F."/>
            <person name="Couve E."/>
            <person name="de Daruvar A."/>
            <person name="Dehoux P."/>
            <person name="Domann E."/>
            <person name="Dominguez-Bernal G."/>
            <person name="Duchaud E."/>
            <person name="Durant L."/>
            <person name="Dussurget O."/>
            <person name="Entian K.-D."/>
            <person name="Fsihi H."/>
            <person name="Garcia-del Portillo F."/>
            <person name="Garrido P."/>
            <person name="Gautier L."/>
            <person name="Goebel W."/>
            <person name="Gomez-Lopez N."/>
            <person name="Hain T."/>
            <person name="Hauf J."/>
            <person name="Jackson D."/>
            <person name="Jones L.-M."/>
            <person name="Kaerst U."/>
            <person name="Kreft J."/>
            <person name="Kuhn M."/>
            <person name="Kunst F."/>
            <person name="Kurapkat G."/>
            <person name="Madueno E."/>
            <person name="Maitournam A."/>
            <person name="Mata Vicente J."/>
            <person name="Ng E."/>
            <person name="Nedjari H."/>
            <person name="Nordsiek G."/>
            <person name="Novella S."/>
            <person name="de Pablos B."/>
            <person name="Perez-Diaz J.-C."/>
            <person name="Purcell R."/>
            <person name="Remmel B."/>
            <person name="Rose M."/>
            <person name="Schlueter T."/>
            <person name="Simoes N."/>
            <person name="Tierrez A."/>
            <person name="Vazquez-Boland J.-A."/>
            <person name="Voss H."/>
            <person name="Wehland J."/>
            <person name="Cossart P."/>
        </authorList>
    </citation>
    <scope>NUCLEOTIDE SEQUENCE [LARGE SCALE GENOMIC DNA]</scope>
    <source>
        <strain>ATCC BAA-680 / CLIP 11262</strain>
    </source>
</reference>
<gene>
    <name evidence="1" type="primary">scpA</name>
    <name type="ordered locus">lin2065</name>
</gene>
<sequence length="249" mass="29096">MVEMNFKVEAFEGPLDLLLHLIGQLEVDIYDIPMAEITDQYMEFVHTMQEMELDVASEYLVMAATLLAIKSKMLLPKQELEIDYDTLEEEEDPRDALVEKLMEYKRFKEAAKELKEKEAERSFYFSKPPMDLAEYDEGTKVAELDVSLNDMLSAFNKMLRRKKLNKPLHTRITTQEISIDDRMNSVLGKLHQQTNHRLRFDELFEEQTKEQLVVTFLALLELMKRKLVEVEQSASFADLYVQGKGEELS</sequence>
<accession>Q92A57</accession>
<evidence type="ECO:0000255" key="1">
    <source>
        <dbReference type="HAMAP-Rule" id="MF_01805"/>
    </source>
</evidence>
<comment type="function">
    <text evidence="1">Participates in chromosomal partition during cell division. May act via the formation of a condensin-like complex containing Smc and ScpB that pull DNA away from mid-cell into both cell halves.</text>
</comment>
<comment type="subunit">
    <text evidence="1">Component of a cohesin-like complex composed of ScpA, ScpB and the Smc homodimer, in which ScpA and ScpB bind to the head domain of Smc. The presence of the three proteins is required for the association of the complex with DNA.</text>
</comment>
<comment type="subcellular location">
    <subcellularLocation>
        <location evidence="1">Cytoplasm</location>
    </subcellularLocation>
    <text evidence="1">Associated with two foci at the outer edges of the nucleoid region in young cells, and at four foci within both cell halves in older cells.</text>
</comment>
<comment type="similarity">
    <text evidence="1">Belongs to the ScpA family.</text>
</comment>
<organism>
    <name type="scientific">Listeria innocua serovar 6a (strain ATCC BAA-680 / CLIP 11262)</name>
    <dbReference type="NCBI Taxonomy" id="272626"/>
    <lineage>
        <taxon>Bacteria</taxon>
        <taxon>Bacillati</taxon>
        <taxon>Bacillota</taxon>
        <taxon>Bacilli</taxon>
        <taxon>Bacillales</taxon>
        <taxon>Listeriaceae</taxon>
        <taxon>Listeria</taxon>
    </lineage>
</organism>
<proteinExistence type="inferred from homology"/>
<dbReference type="EMBL" id="AL596170">
    <property type="protein sequence ID" value="CAC97295.1"/>
    <property type="molecule type" value="Genomic_DNA"/>
</dbReference>
<dbReference type="PIR" id="AG1690">
    <property type="entry name" value="AG1690"/>
</dbReference>
<dbReference type="RefSeq" id="WP_010991733.1">
    <property type="nucleotide sequence ID" value="NC_003212.1"/>
</dbReference>
<dbReference type="SMR" id="Q92A57"/>
<dbReference type="STRING" id="272626.gene:17566423"/>
<dbReference type="KEGG" id="lin:lin2065"/>
<dbReference type="eggNOG" id="COG1354">
    <property type="taxonomic scope" value="Bacteria"/>
</dbReference>
<dbReference type="HOGENOM" id="CLU_038686_3_1_9"/>
<dbReference type="OrthoDB" id="9811016at2"/>
<dbReference type="Proteomes" id="UP000002513">
    <property type="component" value="Chromosome"/>
</dbReference>
<dbReference type="GO" id="GO:0005737">
    <property type="term" value="C:cytoplasm"/>
    <property type="evidence" value="ECO:0007669"/>
    <property type="project" value="UniProtKB-SubCell"/>
</dbReference>
<dbReference type="GO" id="GO:0051301">
    <property type="term" value="P:cell division"/>
    <property type="evidence" value="ECO:0007669"/>
    <property type="project" value="UniProtKB-KW"/>
</dbReference>
<dbReference type="GO" id="GO:0007059">
    <property type="term" value="P:chromosome segregation"/>
    <property type="evidence" value="ECO:0007669"/>
    <property type="project" value="UniProtKB-UniRule"/>
</dbReference>
<dbReference type="GO" id="GO:0006260">
    <property type="term" value="P:DNA replication"/>
    <property type="evidence" value="ECO:0007669"/>
    <property type="project" value="UniProtKB-UniRule"/>
</dbReference>
<dbReference type="Gene3D" id="6.10.250.2410">
    <property type="match status" value="1"/>
</dbReference>
<dbReference type="Gene3D" id="1.10.10.580">
    <property type="entry name" value="Structural maintenance of chromosome 1. Chain E"/>
    <property type="match status" value="1"/>
</dbReference>
<dbReference type="HAMAP" id="MF_01805">
    <property type="entry name" value="ScpA"/>
    <property type="match status" value="1"/>
</dbReference>
<dbReference type="InterPro" id="IPR003768">
    <property type="entry name" value="ScpA"/>
</dbReference>
<dbReference type="InterPro" id="IPR023093">
    <property type="entry name" value="ScpA-like_C"/>
</dbReference>
<dbReference type="NCBIfam" id="NF000995">
    <property type="entry name" value="PRK00104.1-4"/>
    <property type="match status" value="1"/>
</dbReference>
<dbReference type="PANTHER" id="PTHR33969">
    <property type="entry name" value="SEGREGATION AND CONDENSATION PROTEIN A"/>
    <property type="match status" value="1"/>
</dbReference>
<dbReference type="PANTHER" id="PTHR33969:SF2">
    <property type="entry name" value="SEGREGATION AND CONDENSATION PROTEIN A"/>
    <property type="match status" value="1"/>
</dbReference>
<dbReference type="Pfam" id="PF02616">
    <property type="entry name" value="SMC_ScpA"/>
    <property type="match status" value="1"/>
</dbReference>
<keyword id="KW-0131">Cell cycle</keyword>
<keyword id="KW-0132">Cell division</keyword>
<keyword id="KW-0159">Chromosome partition</keyword>
<keyword id="KW-0963">Cytoplasm</keyword>
<feature type="chain" id="PRO_0000211090" description="Segregation and condensation protein A">
    <location>
        <begin position="1"/>
        <end position="249"/>
    </location>
</feature>
<protein>
    <recommendedName>
        <fullName evidence="1">Segregation and condensation protein A</fullName>
    </recommendedName>
</protein>